<reference key="1">
    <citation type="journal article" date="2008" name="Toxicon">
        <title>Expression of mRNAs coding for VAP1/crotastatin-like metalloproteases in the venom glands of three South American pit vipers assessed by quantitative real-time PCR.</title>
        <authorList>
            <person name="Tavares N.A.C."/>
            <person name="Correia J.M."/>
            <person name="Guarnieri M.C."/>
            <person name="Lima-Filho J.L."/>
            <person name="Prieto-da-Silva A.R.B."/>
            <person name="Radis-Baptista G."/>
        </authorList>
    </citation>
    <scope>NUCLEOTIDE SEQUENCE [MRNA]</scope>
    <source>
        <tissue>Venom gland</tissue>
    </source>
</reference>
<keyword id="KW-0053">Apoptosis</keyword>
<keyword id="KW-0106">Calcium</keyword>
<keyword id="KW-1217">Cell adhesion impairing toxin</keyword>
<keyword id="KW-1015">Disulfide bond</keyword>
<keyword id="KW-1206">Fibrinogenolytic toxin</keyword>
<keyword id="KW-0325">Glycoprotein</keyword>
<keyword id="KW-1200">Hemorrhagic toxin</keyword>
<keyword id="KW-1199">Hemostasis impairing toxin</keyword>
<keyword id="KW-0378">Hydrolase</keyword>
<keyword id="KW-0479">Metal-binding</keyword>
<keyword id="KW-0482">Metalloprotease</keyword>
<keyword id="KW-0645">Protease</keyword>
<keyword id="KW-0964">Secreted</keyword>
<keyword id="KW-0800">Toxin</keyword>
<keyword id="KW-0862">Zinc</keyword>
<sequence length="414" mass="46285">EQQRYLNATKYIKLVIVADNVMVRKYTHNLIDIRKRIFEIVNILSLIYLSMNINVALVGVDIWTNGDKINVTSAVEPTLASFGTWRERDLLNRKTHDNAQLLTGINLNGDTVGYAYIGSMCMPKQSVGIVQDHGKTYHLVAVTMAHELGHNLGMDHDRDSCTCLANSCIMSATISPSYQFSDCSQNDHLRYLISHTPQCILNEPLRTDIVSPEVCGNYLLEEGEECDCGPLWNCQNPCCNAATCKLTPGAQCAEGLCCYQCRFIKAGNVCRPPRSECDIAESCTGQSAHCPTDRFHRNGQPCLNNHGYCYNGNCPIMLYQCIALFGAGTTVAEDVCFNYNLDGQGFFYCRRENDRIFPCAKEDVKCGRLYCKVYNDNVHPCRYQYLDNGMVDHGTKCAVGKVCSNRQCVDVNTP</sequence>
<proteinExistence type="evidence at transcript level"/>
<dbReference type="EC" id="3.4.24.-"/>
<dbReference type="EMBL" id="EU733641">
    <property type="protein sequence ID" value="ACI02289.1"/>
    <property type="molecule type" value="mRNA"/>
</dbReference>
<dbReference type="SMR" id="C5H5D4"/>
<dbReference type="MEROPS" id="M12.315"/>
<dbReference type="GO" id="GO:0005576">
    <property type="term" value="C:extracellular region"/>
    <property type="evidence" value="ECO:0007669"/>
    <property type="project" value="UniProtKB-SubCell"/>
</dbReference>
<dbReference type="GO" id="GO:0005886">
    <property type="term" value="C:plasma membrane"/>
    <property type="evidence" value="ECO:0007669"/>
    <property type="project" value="TreeGrafter"/>
</dbReference>
<dbReference type="GO" id="GO:0046872">
    <property type="term" value="F:metal ion binding"/>
    <property type="evidence" value="ECO:0007669"/>
    <property type="project" value="UniProtKB-KW"/>
</dbReference>
<dbReference type="GO" id="GO:0004222">
    <property type="term" value="F:metalloendopeptidase activity"/>
    <property type="evidence" value="ECO:0007669"/>
    <property type="project" value="InterPro"/>
</dbReference>
<dbReference type="GO" id="GO:0090729">
    <property type="term" value="F:toxin activity"/>
    <property type="evidence" value="ECO:0007669"/>
    <property type="project" value="UniProtKB-KW"/>
</dbReference>
<dbReference type="GO" id="GO:0006915">
    <property type="term" value="P:apoptotic process"/>
    <property type="evidence" value="ECO:0007669"/>
    <property type="project" value="UniProtKB-KW"/>
</dbReference>
<dbReference type="GO" id="GO:0006508">
    <property type="term" value="P:proteolysis"/>
    <property type="evidence" value="ECO:0007669"/>
    <property type="project" value="UniProtKB-KW"/>
</dbReference>
<dbReference type="CDD" id="cd04269">
    <property type="entry name" value="ZnMc_adamalysin_II_like"/>
    <property type="match status" value="1"/>
</dbReference>
<dbReference type="FunFam" id="3.40.390.10:FF:000002">
    <property type="entry name" value="Disintegrin and metalloproteinase domain-containing protein 22"/>
    <property type="match status" value="1"/>
</dbReference>
<dbReference type="FunFam" id="4.10.70.10:FF:000001">
    <property type="entry name" value="Disintegrin and metalloproteinase domain-containing protein 22"/>
    <property type="match status" value="1"/>
</dbReference>
<dbReference type="Gene3D" id="3.40.390.10">
    <property type="entry name" value="Collagenase (Catalytic Domain)"/>
    <property type="match status" value="1"/>
</dbReference>
<dbReference type="Gene3D" id="4.10.70.10">
    <property type="entry name" value="Disintegrin domain"/>
    <property type="match status" value="1"/>
</dbReference>
<dbReference type="InterPro" id="IPR006586">
    <property type="entry name" value="ADAM_Cys-rich"/>
</dbReference>
<dbReference type="InterPro" id="IPR018358">
    <property type="entry name" value="Disintegrin_CS"/>
</dbReference>
<dbReference type="InterPro" id="IPR001762">
    <property type="entry name" value="Disintegrin_dom"/>
</dbReference>
<dbReference type="InterPro" id="IPR036436">
    <property type="entry name" value="Disintegrin_dom_sf"/>
</dbReference>
<dbReference type="InterPro" id="IPR024079">
    <property type="entry name" value="MetalloPept_cat_dom_sf"/>
</dbReference>
<dbReference type="InterPro" id="IPR001590">
    <property type="entry name" value="Peptidase_M12B"/>
</dbReference>
<dbReference type="InterPro" id="IPR034027">
    <property type="entry name" value="Reprolysin_adamalysin"/>
</dbReference>
<dbReference type="PANTHER" id="PTHR11905">
    <property type="entry name" value="ADAM A DISINTEGRIN AND METALLOPROTEASE DOMAIN"/>
    <property type="match status" value="1"/>
</dbReference>
<dbReference type="PANTHER" id="PTHR11905:SF32">
    <property type="entry name" value="DISINTEGRIN AND METALLOPROTEINASE DOMAIN-CONTAINING PROTEIN 28"/>
    <property type="match status" value="1"/>
</dbReference>
<dbReference type="Pfam" id="PF08516">
    <property type="entry name" value="ADAM_CR"/>
    <property type="match status" value="1"/>
</dbReference>
<dbReference type="Pfam" id="PF00200">
    <property type="entry name" value="Disintegrin"/>
    <property type="match status" value="1"/>
</dbReference>
<dbReference type="Pfam" id="PF01421">
    <property type="entry name" value="Reprolysin"/>
    <property type="match status" value="1"/>
</dbReference>
<dbReference type="PRINTS" id="PR00289">
    <property type="entry name" value="DISINTEGRIN"/>
</dbReference>
<dbReference type="SMART" id="SM00608">
    <property type="entry name" value="ACR"/>
    <property type="match status" value="1"/>
</dbReference>
<dbReference type="SMART" id="SM00050">
    <property type="entry name" value="DISIN"/>
    <property type="match status" value="1"/>
</dbReference>
<dbReference type="SUPFAM" id="SSF57552">
    <property type="entry name" value="Blood coagulation inhibitor (disintegrin)"/>
    <property type="match status" value="1"/>
</dbReference>
<dbReference type="SUPFAM" id="SSF55486">
    <property type="entry name" value="Metalloproteases ('zincins'), catalytic domain"/>
    <property type="match status" value="1"/>
</dbReference>
<dbReference type="PROSITE" id="PS50215">
    <property type="entry name" value="ADAM_MEPRO"/>
    <property type="match status" value="1"/>
</dbReference>
<dbReference type="PROSITE" id="PS00427">
    <property type="entry name" value="DISINTEGRIN_1"/>
    <property type="match status" value="1"/>
</dbReference>
<dbReference type="PROSITE" id="PS50214">
    <property type="entry name" value="DISINTEGRIN_2"/>
    <property type="match status" value="1"/>
</dbReference>
<dbReference type="PROSITE" id="PS00142">
    <property type="entry name" value="ZINC_PROTEASE"/>
    <property type="match status" value="1"/>
</dbReference>
<evidence type="ECO:0000250" key="1"/>
<evidence type="ECO:0000255" key="2"/>
<evidence type="ECO:0000255" key="3">
    <source>
        <dbReference type="PROSITE-ProRule" id="PRU00068"/>
    </source>
</evidence>
<evidence type="ECO:0000255" key="4">
    <source>
        <dbReference type="PROSITE-ProRule" id="PRU00276"/>
    </source>
</evidence>
<evidence type="ECO:0000255" key="5">
    <source>
        <dbReference type="PROSITE-ProRule" id="PRU10095"/>
    </source>
</evidence>
<evidence type="ECO:0000305" key="6"/>
<accession>C5H5D4</accession>
<protein>
    <recommendedName>
        <fullName>Zinc metalloproteinase-disintegrin-like batroxstatin-3</fullName>
        <ecNumber>3.4.24.-</ecNumber>
    </recommendedName>
    <alternativeName>
        <fullName>Snake venom metalloprotease</fullName>
        <shortName>SVMP</shortName>
    </alternativeName>
    <alternativeName>
        <fullName>Vascular apoptosis-inducing protein-like</fullName>
        <shortName>VAP-like</shortName>
    </alternativeName>
</protein>
<organism>
    <name type="scientific">Bothrops atrox</name>
    <name type="common">Barba amarilla</name>
    <name type="synonym">Fer-de-lance</name>
    <dbReference type="NCBI Taxonomy" id="8725"/>
    <lineage>
        <taxon>Eukaryota</taxon>
        <taxon>Metazoa</taxon>
        <taxon>Chordata</taxon>
        <taxon>Craniata</taxon>
        <taxon>Vertebrata</taxon>
        <taxon>Euteleostomi</taxon>
        <taxon>Lepidosauria</taxon>
        <taxon>Squamata</taxon>
        <taxon>Bifurcata</taxon>
        <taxon>Unidentata</taxon>
        <taxon>Episquamata</taxon>
        <taxon>Toxicofera</taxon>
        <taxon>Serpentes</taxon>
        <taxon>Colubroidea</taxon>
        <taxon>Viperidae</taxon>
        <taxon>Crotalinae</taxon>
        <taxon>Bothrops</taxon>
    </lineage>
</organism>
<name>VM33_BOTAT</name>
<feature type="chain" id="PRO_0000418200" description="Zinc metalloproteinase-disintegrin-like batroxstatin-3">
    <location>
        <begin position="1"/>
        <end position="414" status="greater than"/>
    </location>
</feature>
<feature type="domain" description="Peptidase M12B" evidence="4">
    <location>
        <begin position="10"/>
        <end position="204"/>
    </location>
</feature>
<feature type="domain" description="Disintegrin" evidence="3">
    <location>
        <begin position="212"/>
        <end position="298"/>
    </location>
</feature>
<feature type="short sequence motif" description="D/ECD-tripeptide">
    <location>
        <begin position="276"/>
        <end position="278"/>
    </location>
</feature>
<feature type="active site" evidence="4 5">
    <location>
        <position position="147"/>
    </location>
</feature>
<feature type="binding site" evidence="1">
    <location>
        <position position="146"/>
    </location>
    <ligand>
        <name>Zn(2+)</name>
        <dbReference type="ChEBI" id="CHEBI:29105"/>
        <note>catalytic</note>
    </ligand>
</feature>
<feature type="binding site" evidence="1">
    <location>
        <position position="150"/>
    </location>
    <ligand>
        <name>Zn(2+)</name>
        <dbReference type="ChEBI" id="CHEBI:29105"/>
        <note>catalytic</note>
    </ligand>
</feature>
<feature type="binding site" evidence="1">
    <location>
        <position position="156"/>
    </location>
    <ligand>
        <name>Zn(2+)</name>
        <dbReference type="ChEBI" id="CHEBI:29105"/>
        <note>catalytic</note>
    </ligand>
</feature>
<feature type="binding site" evidence="1">
    <location>
        <position position="214"/>
    </location>
    <ligand>
        <name>Ca(2+)</name>
        <dbReference type="ChEBI" id="CHEBI:29108"/>
        <label>1</label>
    </ligand>
</feature>
<feature type="binding site" evidence="1">
    <location>
        <position position="217"/>
    </location>
    <ligand>
        <name>Ca(2+)</name>
        <dbReference type="ChEBI" id="CHEBI:29108"/>
        <label>1</label>
    </ligand>
</feature>
<feature type="binding site" evidence="1">
    <location>
        <position position="221"/>
    </location>
    <ligand>
        <name>Ca(2+)</name>
        <dbReference type="ChEBI" id="CHEBI:29108"/>
        <label>1</label>
    </ligand>
</feature>
<feature type="binding site" evidence="1">
    <location>
        <position position="224"/>
    </location>
    <ligand>
        <name>Ca(2+)</name>
        <dbReference type="ChEBI" id="CHEBI:29108"/>
        <label>1</label>
    </ligand>
</feature>
<feature type="binding site" evidence="1">
    <location>
        <position position="227"/>
    </location>
    <ligand>
        <name>Ca(2+)</name>
        <dbReference type="ChEBI" id="CHEBI:29108"/>
        <label>1</label>
    </ligand>
</feature>
<feature type="binding site" evidence="1">
    <location>
        <position position="278"/>
    </location>
    <ligand>
        <name>Ca(2+)</name>
        <dbReference type="ChEBI" id="CHEBI:29108"/>
        <label>2</label>
    </ligand>
</feature>
<feature type="binding site" evidence="1">
    <location>
        <position position="281"/>
    </location>
    <ligand>
        <name>Ca(2+)</name>
        <dbReference type="ChEBI" id="CHEBI:29108"/>
        <label>2</label>
    </ligand>
</feature>
<feature type="binding site" evidence="1">
    <location>
        <position position="293"/>
    </location>
    <ligand>
        <name>Ca(2+)</name>
        <dbReference type="ChEBI" id="CHEBI:29108"/>
        <label>2</label>
    </ligand>
</feature>
<feature type="binding site" evidence="1">
    <location>
        <position position="294"/>
    </location>
    <ligand>
        <name>Ca(2+)</name>
        <dbReference type="ChEBI" id="CHEBI:29108"/>
        <label>2</label>
    </ligand>
</feature>
<feature type="glycosylation site" description="N-linked (GlcNAc...) asparagine" evidence="2">
    <location>
        <position position="7"/>
    </location>
</feature>
<feature type="glycosylation site" description="N-linked (GlcNAc...) asparagine" evidence="2">
    <location>
        <position position="70"/>
    </location>
</feature>
<feature type="disulfide bond" evidence="1">
    <location>
        <begin position="121"/>
        <end position="199"/>
    </location>
</feature>
<feature type="disulfide bond" evidence="1">
    <location>
        <begin position="161"/>
        <end position="183"/>
    </location>
</feature>
<feature type="disulfide bond" evidence="1">
    <location>
        <begin position="163"/>
        <end position="168"/>
    </location>
</feature>
<feature type="disulfide bond" evidence="1">
    <location>
        <begin position="215"/>
        <end position="244"/>
    </location>
</feature>
<feature type="disulfide bond" evidence="1">
    <location>
        <begin position="226"/>
        <end position="239"/>
    </location>
</feature>
<feature type="disulfide bond" evidence="1">
    <location>
        <begin position="228"/>
        <end position="234"/>
    </location>
</feature>
<feature type="disulfide bond" evidence="1">
    <location>
        <begin position="238"/>
        <end position="261"/>
    </location>
</feature>
<feature type="disulfide bond" evidence="1">
    <location>
        <begin position="252"/>
        <end position="258"/>
    </location>
</feature>
<feature type="disulfide bond" evidence="1">
    <location>
        <begin position="257"/>
        <end position="283"/>
    </location>
</feature>
<feature type="disulfide bond" evidence="1">
    <location>
        <begin position="270"/>
        <end position="290"/>
    </location>
</feature>
<feature type="disulfide bond" evidence="1">
    <location>
        <begin position="277"/>
        <end position="309"/>
    </location>
</feature>
<feature type="disulfide bond" evidence="1">
    <location>
        <begin position="302"/>
        <end position="314"/>
    </location>
</feature>
<feature type="disulfide bond" evidence="1">
    <location>
        <begin position="321"/>
        <end position="371"/>
    </location>
</feature>
<feature type="disulfide bond" evidence="1">
    <location>
        <begin position="336"/>
        <end position="381"/>
    </location>
</feature>
<feature type="disulfide bond" evidence="1">
    <location>
        <begin position="349"/>
        <end position="359"/>
    </location>
</feature>
<feature type="disulfide bond" evidence="1">
    <location>
        <begin position="366"/>
        <end position="403"/>
    </location>
</feature>
<feature type="disulfide bond" evidence="1">
    <location>
        <begin position="397"/>
        <end position="408"/>
    </location>
</feature>
<feature type="non-terminal residue">
    <location>
        <position position="414"/>
    </location>
</feature>
<comment type="function">
    <text evidence="1">Snake venom zinc metalloprotease that induces apoptosis in vascular endothelial cells (VEC), without degrading the extracellular matrix (it cannot cleave collagen) or inhibiting adhesion of VEC. Has also fibrinogenolytic and hemorrhagic activities (By similarity).</text>
</comment>
<comment type="cofactor">
    <cofactor evidence="1">
        <name>Zn(2+)</name>
        <dbReference type="ChEBI" id="CHEBI:29105"/>
    </cofactor>
    <text evidence="1">Binds 1 zinc ion per subunit.</text>
</comment>
<comment type="subunit">
    <text evidence="1">Monomer.</text>
</comment>
<comment type="subcellular location">
    <subcellularLocation>
        <location evidence="1">Secreted</location>
    </subcellularLocation>
</comment>
<comment type="tissue specificity">
    <text>Expressed by the venom gland.</text>
</comment>
<comment type="similarity">
    <text evidence="6">Belongs to the venom metalloproteinase (M12B) family. P-III subfamily. P-IIIa sub-subfamily.</text>
</comment>
<comment type="caution">
    <text evidence="6">Lacks a Cys at position 176 preventing the formation of a homodimer.</text>
</comment>